<reference key="1">
    <citation type="journal article" date="1992" name="Virology">
        <title>Sequences of the raccoon poxvirus hemagglutinin protein.</title>
        <authorList>
            <person name="Cavallaro K.F."/>
            <person name="Esposito J.J."/>
        </authorList>
    </citation>
    <scope>NUCLEOTIDE SEQUENCE [GENOMIC DNA]</scope>
</reference>
<reference key="2">
    <citation type="submission" date="2001-05" db="EMBL/GenBank/DDBJ databases">
        <title>Phylogenetic analysis of orthopoxviruses.</title>
        <authorList>
            <person name="Esposito J.J."/>
            <person name="Ropp S.L."/>
            <person name="Jin Q."/>
            <person name="Cai B."/>
            <person name="Knight J.C."/>
            <person name="Yu L."/>
            <person name="Taubenberger J.K."/>
            <person name="Tsai M.M."/>
            <person name="Nowotny N."/>
            <person name="Meyer H."/>
            <person name="Cavallaro K.F."/>
        </authorList>
    </citation>
    <scope>NUCLEOTIDE SEQUENCE [GENOMIC DNA]</scope>
    <source>
        <strain>Isolate rcn-84</strain>
        <strain>Isolate rcn-85a</strain>
        <strain>Isolate rcn-85b</strain>
    </source>
</reference>
<name>HEMA_RACVI</name>
<protein>
    <recommendedName>
        <fullName>Protein A56</fullName>
    </recommendedName>
    <alternativeName>
        <fullName>Hemagglutinin</fullName>
    </alternativeName>
</protein>
<accession>Q00716</accession>
<comment type="function">
    <text evidence="1">Prevents cell to cell fusion by interacting with and directing the viral K2 protein on the host plasma membrane. The A56-K2 complex associates with components of the entry fusion complex (EFC) presumably to avoid superinfection and syncytium formation. Via its interaction with C3/VCP protein, protects the infected cell and probably also the extracellular enveloped virus from complement attack (By similarity).</text>
</comment>
<comment type="subunit">
    <text evidence="1">Heterodimerizes with K2. The heterodimer A56/K2 interacts with components of the entry fusion complex A16 and G9. Interacts with K2 protein. Heterodimer with C3/VPC protein; disulfide-linked (By similarity).</text>
</comment>
<comment type="subcellular location">
    <subcellularLocation>
        <location evidence="1">Virion membrane</location>
        <topology evidence="1">Single-pass type I membrane protein</topology>
    </subcellularLocation>
    <subcellularLocation>
        <location evidence="1">Host membrane</location>
        <topology evidence="1">Single-pass type I membrane protein</topology>
    </subcellularLocation>
    <text>Component of extracellular enveloped virus (EEV) but not intracellular mature virus (IMV). Component of the outermost membrane of EEV.</text>
</comment>
<comment type="PTM">
    <text evidence="1">Glycosylated; contains phosphate and sulfate-substituted glycans. O-glycosylation is required for hemagglutination and hemadsorption activities of infected cell membranes (By similarity).</text>
</comment>
<feature type="signal peptide" evidence="2">
    <location>
        <begin position="1"/>
        <end position="16"/>
    </location>
</feature>
<feature type="chain" id="PRO_0000040571" description="Protein A56">
    <location>
        <begin position="17"/>
        <end position="310"/>
    </location>
</feature>
<feature type="topological domain" description="Virion surface" evidence="2">
    <location>
        <begin position="17"/>
        <end position="275"/>
    </location>
</feature>
<feature type="transmembrane region" description="Helical" evidence="2">
    <location>
        <begin position="276"/>
        <end position="300"/>
    </location>
</feature>
<feature type="topological domain" description="Intravirion" evidence="2">
    <location>
        <begin position="301"/>
        <end position="310"/>
    </location>
</feature>
<feature type="domain" description="Ig-like V-type">
    <location>
        <begin position="19"/>
        <end position="121"/>
    </location>
</feature>
<feature type="region of interest" description="Disordered" evidence="4">
    <location>
        <begin position="153"/>
        <end position="195"/>
    </location>
</feature>
<feature type="compositionally biased region" description="Low complexity" evidence="4">
    <location>
        <begin position="162"/>
        <end position="193"/>
    </location>
</feature>
<feature type="glycosylation site" description="N-linked (GlcNAc...) asparagine; by host" evidence="2">
    <location>
        <position position="39"/>
    </location>
</feature>
<feature type="glycosylation site" description="N-linked (GlcNAc...) asparagine; by host" evidence="2">
    <location>
        <position position="113"/>
    </location>
</feature>
<feature type="glycosylation site" description="N-linked (GlcNAc...) asparagine; by host" evidence="2">
    <location>
        <position position="133"/>
    </location>
</feature>
<feature type="glycosylation site" description="N-linked (GlcNAc...) asparagine; by host" evidence="2">
    <location>
        <position position="203"/>
    </location>
</feature>
<feature type="disulfide bond" evidence="3">
    <location>
        <begin position="36"/>
        <end position="105"/>
    </location>
</feature>
<evidence type="ECO:0000250" key="1"/>
<evidence type="ECO:0000255" key="2"/>
<evidence type="ECO:0000255" key="3">
    <source>
        <dbReference type="PROSITE-ProRule" id="PRU00114"/>
    </source>
</evidence>
<evidence type="ECO:0000256" key="4">
    <source>
        <dbReference type="SAM" id="MobiDB-lite"/>
    </source>
</evidence>
<keyword id="KW-1015">Disulfide bond</keyword>
<keyword id="KW-0325">Glycoprotein</keyword>
<keyword id="KW-0348">Hemagglutinin</keyword>
<keyword id="KW-1043">Host membrane</keyword>
<keyword id="KW-0393">Immunoglobulin domain</keyword>
<keyword id="KW-0426">Late protein</keyword>
<keyword id="KW-0472">Membrane</keyword>
<keyword id="KW-0732">Signal</keyword>
<keyword id="KW-0812">Transmembrane</keyword>
<keyword id="KW-1133">Transmembrane helix</keyword>
<keyword id="KW-0261">Viral envelope protein</keyword>
<keyword id="KW-0946">Virion</keyword>
<organism>
    <name type="scientific">Raccoon poxvirus</name>
    <name type="common">RCN</name>
    <dbReference type="NCBI Taxonomy" id="10256"/>
    <lineage>
        <taxon>Viruses</taxon>
        <taxon>Varidnaviria</taxon>
        <taxon>Bamfordvirae</taxon>
        <taxon>Nucleocytoviricota</taxon>
        <taxon>Pokkesviricetes</taxon>
        <taxon>Chitovirales</taxon>
        <taxon>Poxviridae</taxon>
        <taxon>Chordopoxvirinae</taxon>
        <taxon>Orthopoxvirus</taxon>
    </lineage>
</organism>
<dbReference type="EMBL" id="M94169">
    <property type="protein sequence ID" value="AAA47231.1"/>
    <property type="molecule type" value="Genomic_DNA"/>
</dbReference>
<dbReference type="EMBL" id="AF375115">
    <property type="protein sequence ID" value="AAN47049.1"/>
    <property type="molecule type" value="Genomic_DNA"/>
</dbReference>
<dbReference type="EMBL" id="AF375116">
    <property type="protein sequence ID" value="AAN47050.1"/>
    <property type="molecule type" value="Genomic_DNA"/>
</dbReference>
<dbReference type="EMBL" id="AF375117">
    <property type="protein sequence ID" value="AAN47051.1"/>
    <property type="molecule type" value="Genomic_DNA"/>
</dbReference>
<dbReference type="PIR" id="A43381">
    <property type="entry name" value="HNVZRA"/>
</dbReference>
<dbReference type="SMR" id="Q00716"/>
<dbReference type="GlyCosmos" id="Q00716">
    <property type="glycosylation" value="4 sites, No reported glycans"/>
</dbReference>
<dbReference type="GO" id="GO:0033644">
    <property type="term" value="C:host cell membrane"/>
    <property type="evidence" value="ECO:0007669"/>
    <property type="project" value="UniProtKB-SubCell"/>
</dbReference>
<dbReference type="GO" id="GO:0016020">
    <property type="term" value="C:membrane"/>
    <property type="evidence" value="ECO:0007669"/>
    <property type="project" value="UniProtKB-KW"/>
</dbReference>
<dbReference type="GO" id="GO:0019031">
    <property type="term" value="C:viral envelope"/>
    <property type="evidence" value="ECO:0007669"/>
    <property type="project" value="UniProtKB-KW"/>
</dbReference>
<dbReference type="GO" id="GO:0055036">
    <property type="term" value="C:virion membrane"/>
    <property type="evidence" value="ECO:0007669"/>
    <property type="project" value="UniProtKB-SubCell"/>
</dbReference>
<dbReference type="Gene3D" id="2.60.40.10">
    <property type="entry name" value="Immunoglobulins"/>
    <property type="match status" value="1"/>
</dbReference>
<dbReference type="InterPro" id="IPR007110">
    <property type="entry name" value="Ig-like_dom"/>
</dbReference>
<dbReference type="InterPro" id="IPR036179">
    <property type="entry name" value="Ig-like_dom_sf"/>
</dbReference>
<dbReference type="InterPro" id="IPR013783">
    <property type="entry name" value="Ig-like_fold"/>
</dbReference>
<dbReference type="InterPro" id="IPR003599">
    <property type="entry name" value="Ig_sub"/>
</dbReference>
<dbReference type="InterPro" id="IPR013106">
    <property type="entry name" value="Ig_V-set"/>
</dbReference>
<dbReference type="Pfam" id="PF07686">
    <property type="entry name" value="V-set"/>
    <property type="match status" value="1"/>
</dbReference>
<dbReference type="SMART" id="SM00409">
    <property type="entry name" value="IG"/>
    <property type="match status" value="1"/>
</dbReference>
<dbReference type="SUPFAM" id="SSF48726">
    <property type="entry name" value="Immunoglobulin"/>
    <property type="match status" value="1"/>
</dbReference>
<dbReference type="PROSITE" id="PS50835">
    <property type="entry name" value="IG_LIKE"/>
    <property type="match status" value="1"/>
</dbReference>
<organismHost>
    <name type="scientific">Procyon lotor</name>
    <name type="common">Raccoon</name>
    <dbReference type="NCBI Taxonomy" id="9654"/>
</organismHost>
<sequence>MKQLSIVILLLSIVYTTKPHPTQISKKLGDDATLSCNRNNTHGYLVMSSWYKKPDSIILLAAKNDVVYFDDYTADKVSYDSPYDTLATIITIKSLTSADAGTYICAFFITSTNDTDKIDYEEYFIDLVVNPANVSTIDAILSGSTTQQDIISHTEEQHDSDTTICTSESTTQISETSESTTSSQISETSESTSYGVEDDTQYNVTTDTTDNSDTIGTLPEEDTTTISTTIHKTTTTDDNLYDTYNEPISVSSSIPTTVESVTISTTKYTTSDFIEIFGIVSLILLLAVAIFCIIYYFCSGRSRKQETNIL</sequence>
<proteinExistence type="inferred from homology"/>
<gene>
    <name type="primary">HA</name>
</gene>